<accession>Q92JH2</accession>
<dbReference type="EC" id="6.1.1.19" evidence="1"/>
<dbReference type="EMBL" id="AE006914">
    <property type="protein sequence ID" value="AAL02633.1"/>
    <property type="molecule type" value="Genomic_DNA"/>
</dbReference>
<dbReference type="PIR" id="G97711">
    <property type="entry name" value="G97711"/>
</dbReference>
<dbReference type="RefSeq" id="WP_010976779.1">
    <property type="nucleotide sequence ID" value="NC_003103.1"/>
</dbReference>
<dbReference type="SMR" id="Q92JH2"/>
<dbReference type="GeneID" id="928099"/>
<dbReference type="KEGG" id="rco:RC0095"/>
<dbReference type="PATRIC" id="fig|272944.4.peg.113"/>
<dbReference type="HOGENOM" id="CLU_006406_0_1_5"/>
<dbReference type="Proteomes" id="UP000000816">
    <property type="component" value="Chromosome"/>
</dbReference>
<dbReference type="GO" id="GO:0005737">
    <property type="term" value="C:cytoplasm"/>
    <property type="evidence" value="ECO:0007669"/>
    <property type="project" value="UniProtKB-SubCell"/>
</dbReference>
<dbReference type="GO" id="GO:0004814">
    <property type="term" value="F:arginine-tRNA ligase activity"/>
    <property type="evidence" value="ECO:0007669"/>
    <property type="project" value="UniProtKB-UniRule"/>
</dbReference>
<dbReference type="GO" id="GO:0005524">
    <property type="term" value="F:ATP binding"/>
    <property type="evidence" value="ECO:0007669"/>
    <property type="project" value="UniProtKB-UniRule"/>
</dbReference>
<dbReference type="GO" id="GO:0006420">
    <property type="term" value="P:arginyl-tRNA aminoacylation"/>
    <property type="evidence" value="ECO:0007669"/>
    <property type="project" value="UniProtKB-UniRule"/>
</dbReference>
<dbReference type="CDD" id="cd00671">
    <property type="entry name" value="ArgRS_core"/>
    <property type="match status" value="1"/>
</dbReference>
<dbReference type="Gene3D" id="3.30.1360.70">
    <property type="entry name" value="Arginyl tRNA synthetase N-terminal domain"/>
    <property type="match status" value="1"/>
</dbReference>
<dbReference type="Gene3D" id="3.40.50.620">
    <property type="entry name" value="HUPs"/>
    <property type="match status" value="1"/>
</dbReference>
<dbReference type="Gene3D" id="1.10.730.10">
    <property type="entry name" value="Isoleucyl-tRNA Synthetase, Domain 1"/>
    <property type="match status" value="1"/>
</dbReference>
<dbReference type="HAMAP" id="MF_00123">
    <property type="entry name" value="Arg_tRNA_synth"/>
    <property type="match status" value="1"/>
</dbReference>
<dbReference type="InterPro" id="IPR001412">
    <property type="entry name" value="aa-tRNA-synth_I_CS"/>
</dbReference>
<dbReference type="InterPro" id="IPR001278">
    <property type="entry name" value="Arg-tRNA-ligase"/>
</dbReference>
<dbReference type="InterPro" id="IPR005148">
    <property type="entry name" value="Arg-tRNA-synth_N"/>
</dbReference>
<dbReference type="InterPro" id="IPR036695">
    <property type="entry name" value="Arg-tRNA-synth_N_sf"/>
</dbReference>
<dbReference type="InterPro" id="IPR035684">
    <property type="entry name" value="ArgRS_core"/>
</dbReference>
<dbReference type="InterPro" id="IPR008909">
    <property type="entry name" value="DALR_anticod-bd"/>
</dbReference>
<dbReference type="InterPro" id="IPR014729">
    <property type="entry name" value="Rossmann-like_a/b/a_fold"/>
</dbReference>
<dbReference type="InterPro" id="IPR009080">
    <property type="entry name" value="tRNAsynth_Ia_anticodon-bd"/>
</dbReference>
<dbReference type="NCBIfam" id="TIGR00456">
    <property type="entry name" value="argS"/>
    <property type="match status" value="1"/>
</dbReference>
<dbReference type="PANTHER" id="PTHR11956:SF5">
    <property type="entry name" value="ARGININE--TRNA LIGASE, CYTOPLASMIC"/>
    <property type="match status" value="1"/>
</dbReference>
<dbReference type="PANTHER" id="PTHR11956">
    <property type="entry name" value="ARGINYL-TRNA SYNTHETASE"/>
    <property type="match status" value="1"/>
</dbReference>
<dbReference type="Pfam" id="PF03485">
    <property type="entry name" value="Arg_tRNA_synt_N"/>
    <property type="match status" value="1"/>
</dbReference>
<dbReference type="Pfam" id="PF05746">
    <property type="entry name" value="DALR_1"/>
    <property type="match status" value="1"/>
</dbReference>
<dbReference type="Pfam" id="PF00750">
    <property type="entry name" value="tRNA-synt_1d"/>
    <property type="match status" value="1"/>
</dbReference>
<dbReference type="PRINTS" id="PR01038">
    <property type="entry name" value="TRNASYNTHARG"/>
</dbReference>
<dbReference type="SMART" id="SM01016">
    <property type="entry name" value="Arg_tRNA_synt_N"/>
    <property type="match status" value="1"/>
</dbReference>
<dbReference type="SMART" id="SM00836">
    <property type="entry name" value="DALR_1"/>
    <property type="match status" value="1"/>
</dbReference>
<dbReference type="SUPFAM" id="SSF47323">
    <property type="entry name" value="Anticodon-binding domain of a subclass of class I aminoacyl-tRNA synthetases"/>
    <property type="match status" value="1"/>
</dbReference>
<dbReference type="SUPFAM" id="SSF55190">
    <property type="entry name" value="Arginyl-tRNA synthetase (ArgRS), N-terminal 'additional' domain"/>
    <property type="match status" value="1"/>
</dbReference>
<dbReference type="SUPFAM" id="SSF52374">
    <property type="entry name" value="Nucleotidylyl transferase"/>
    <property type="match status" value="1"/>
</dbReference>
<dbReference type="PROSITE" id="PS00178">
    <property type="entry name" value="AA_TRNA_LIGASE_I"/>
    <property type="match status" value="1"/>
</dbReference>
<evidence type="ECO:0000255" key="1">
    <source>
        <dbReference type="HAMAP-Rule" id="MF_00123"/>
    </source>
</evidence>
<proteinExistence type="inferred from homology"/>
<organism>
    <name type="scientific">Rickettsia conorii (strain ATCC VR-613 / Malish 7)</name>
    <dbReference type="NCBI Taxonomy" id="272944"/>
    <lineage>
        <taxon>Bacteria</taxon>
        <taxon>Pseudomonadati</taxon>
        <taxon>Pseudomonadota</taxon>
        <taxon>Alphaproteobacteria</taxon>
        <taxon>Rickettsiales</taxon>
        <taxon>Rickettsiaceae</taxon>
        <taxon>Rickettsieae</taxon>
        <taxon>Rickettsia</taxon>
        <taxon>spotted fever group</taxon>
    </lineage>
</organism>
<comment type="catalytic activity">
    <reaction evidence="1">
        <text>tRNA(Arg) + L-arginine + ATP = L-arginyl-tRNA(Arg) + AMP + diphosphate</text>
        <dbReference type="Rhea" id="RHEA:20301"/>
        <dbReference type="Rhea" id="RHEA-COMP:9658"/>
        <dbReference type="Rhea" id="RHEA-COMP:9673"/>
        <dbReference type="ChEBI" id="CHEBI:30616"/>
        <dbReference type="ChEBI" id="CHEBI:32682"/>
        <dbReference type="ChEBI" id="CHEBI:33019"/>
        <dbReference type="ChEBI" id="CHEBI:78442"/>
        <dbReference type="ChEBI" id="CHEBI:78513"/>
        <dbReference type="ChEBI" id="CHEBI:456215"/>
        <dbReference type="EC" id="6.1.1.19"/>
    </reaction>
</comment>
<comment type="subunit">
    <text evidence="1">Monomer.</text>
</comment>
<comment type="subcellular location">
    <subcellularLocation>
        <location evidence="1">Cytoplasm</location>
    </subcellularLocation>
</comment>
<comment type="similarity">
    <text evidence="1">Belongs to the class-I aminoacyl-tRNA synthetase family.</text>
</comment>
<reference key="1">
    <citation type="journal article" date="2001" name="Science">
        <title>Mechanisms of evolution in Rickettsia conorii and R. prowazekii.</title>
        <authorList>
            <person name="Ogata H."/>
            <person name="Audic S."/>
            <person name="Renesto-Audiffren P."/>
            <person name="Fournier P.-E."/>
            <person name="Barbe V."/>
            <person name="Samson D."/>
            <person name="Roux V."/>
            <person name="Cossart P."/>
            <person name="Weissenbach J."/>
            <person name="Claverie J.-M."/>
            <person name="Raoult D."/>
        </authorList>
    </citation>
    <scope>NUCLEOTIDE SEQUENCE [LARGE SCALE GENOMIC DNA]</scope>
    <source>
        <strain>ATCC VR-613 / Malish 7</strain>
    </source>
</reference>
<feature type="chain" id="PRO_0000151599" description="Arginine--tRNA ligase">
    <location>
        <begin position="1"/>
        <end position="576"/>
    </location>
</feature>
<feature type="short sequence motif" description="'HIGH' region">
    <location>
        <begin position="128"/>
        <end position="136"/>
    </location>
</feature>
<name>SYR_RICCN</name>
<keyword id="KW-0030">Aminoacyl-tRNA synthetase</keyword>
<keyword id="KW-0067">ATP-binding</keyword>
<keyword id="KW-0963">Cytoplasm</keyword>
<keyword id="KW-0436">Ligase</keyword>
<keyword id="KW-0547">Nucleotide-binding</keyword>
<keyword id="KW-0648">Protein biosynthesis</keyword>
<gene>
    <name evidence="1" type="primary">argS</name>
    <name type="ordered locus">RC0095</name>
</gene>
<protein>
    <recommendedName>
        <fullName evidence="1">Arginine--tRNA ligase</fullName>
        <ecNumber evidence="1">6.1.1.19</ecNumber>
    </recommendedName>
    <alternativeName>
        <fullName evidence="1">Arginyl-tRNA synthetase</fullName>
        <shortName evidence="1">ArgRS</shortName>
    </alternativeName>
</protein>
<sequence length="576" mass="65234">MNIFNQLKQDIIVASRQLYNNQEIANTATIEIPKDSFNGDLSSNIAMIIAAKESIAPREVALKFKEVLITLPYIASIEIAGPGFINFTIKADSWQASIKDILQHEEKFFEIDIDKSRNINIEYVSANPTGPMHIGHARGAVYGDVLARILQKVSYSVTKEYYVNDAGSQINDLVSTVLLRYKEALGEQITIPAGLYPGEYLIPLGQILAKEYGNKLLTMNYAERFKIIKSFAVEKMLDLNRKDLADLGIKHDIFFSEQSLHDKGEIEETVKLLERMGLIYEGTLPAPKGKIHEEWDNRVQKLFKSTKYGDSQDRPIEKADGSWSYFASDLAYAKDKIERGANHLIYVLGADHSGYVKRIEAIVKALGKEQVKVDVKICQLVNFVENGVPVKMSKRLGSFASVQDVNHEVGKDIIRFMMLTRQNDKPLDFDLVKVKEQSRENPIFYVQYAHVRTISILSKAKELMPESYNNFESGKYDLSLLSSEEEIEIIKLLASWTKTLEASAKYFEPHRIAFYLINLASKFHSMWNFGKENSDYRFVIESNKELTLARLALASAIQKVIASGLEVIGVEPMNKM</sequence>